<proteinExistence type="evidence at protein level"/>
<comment type="subcellular location">
    <subcellularLocation>
        <location evidence="1">Virion</location>
    </subcellularLocation>
</comment>
<comment type="similarity">
    <text evidence="2">Belongs to the phosphatidylethanolamine-binding protein family.</text>
</comment>
<evidence type="ECO:0000269" key="1">
    <source>
    </source>
</evidence>
<evidence type="ECO:0000305" key="2"/>
<gene>
    <name type="ordered locus">MIMI_R644</name>
</gene>
<feature type="chain" id="PRO_0000204766" description="Phosphatidylethanolamine-binding protein homolog R644">
    <location>
        <begin position="1"/>
        <end position="143"/>
    </location>
</feature>
<keyword id="KW-0446">Lipid-binding</keyword>
<keyword id="KW-1185">Reference proteome</keyword>
<keyword id="KW-0946">Virion</keyword>
<organism>
    <name type="scientific">Acanthamoeba polyphaga mimivirus</name>
    <name type="common">APMV</name>
    <dbReference type="NCBI Taxonomy" id="212035"/>
    <lineage>
        <taxon>Viruses</taxon>
        <taxon>Varidnaviria</taxon>
        <taxon>Bamfordvirae</taxon>
        <taxon>Nucleocytoviricota</taxon>
        <taxon>Megaviricetes</taxon>
        <taxon>Imitervirales</taxon>
        <taxon>Mimiviridae</taxon>
        <taxon>Megamimivirinae</taxon>
        <taxon>Mimivirus</taxon>
        <taxon>Mimivirus bradfordmassiliense</taxon>
    </lineage>
</organism>
<sequence length="143" mass="16882">MSNDFKVIINGQNIDNGQKIIFEKSQDVPKPIFDIGDNEYYTIAMVDPDAPSRENPIYKYFLHMLIVNNYQTLVSFQPPSPPKGSGYHRYFFFLLKQPKYIDQNIWKQQINNNSIRREKFNLSEFISDNKLTVIASTYFKTKR</sequence>
<accession>Q5UR88</accession>
<name>PEBPH_MIMIV</name>
<organismHost>
    <name type="scientific">Acanthamoeba polyphaga</name>
    <name type="common">Amoeba</name>
    <dbReference type="NCBI Taxonomy" id="5757"/>
</organismHost>
<dbReference type="EMBL" id="AY653733">
    <property type="protein sequence ID" value="AAV50905.1"/>
    <property type="molecule type" value="Genomic_DNA"/>
</dbReference>
<dbReference type="SMR" id="Q5UR88"/>
<dbReference type="KEGG" id="vg:9925289"/>
<dbReference type="Proteomes" id="UP000001134">
    <property type="component" value="Genome"/>
</dbReference>
<dbReference type="GO" id="GO:0044423">
    <property type="term" value="C:virion component"/>
    <property type="evidence" value="ECO:0007669"/>
    <property type="project" value="UniProtKB-KW"/>
</dbReference>
<dbReference type="GO" id="GO:0008289">
    <property type="term" value="F:lipid binding"/>
    <property type="evidence" value="ECO:0007669"/>
    <property type="project" value="UniProtKB-KW"/>
</dbReference>
<dbReference type="CDD" id="cd00866">
    <property type="entry name" value="PEBP_euk"/>
    <property type="match status" value="1"/>
</dbReference>
<dbReference type="Gene3D" id="3.90.280.10">
    <property type="entry name" value="PEBP-like"/>
    <property type="match status" value="1"/>
</dbReference>
<dbReference type="InterPro" id="IPR008914">
    <property type="entry name" value="PEBP"/>
</dbReference>
<dbReference type="InterPro" id="IPR036610">
    <property type="entry name" value="PEBP-like_sf"/>
</dbReference>
<dbReference type="InterPro" id="IPR035810">
    <property type="entry name" value="PEBP_euk"/>
</dbReference>
<dbReference type="PANTHER" id="PTHR11362">
    <property type="entry name" value="PHOSPHATIDYLETHANOLAMINE-BINDING PROTEIN"/>
    <property type="match status" value="1"/>
</dbReference>
<dbReference type="PANTHER" id="PTHR11362:SF82">
    <property type="entry name" value="PHOSPHATIDYLETHANOLAMINE-BINDING PROTEIN 4"/>
    <property type="match status" value="1"/>
</dbReference>
<dbReference type="Pfam" id="PF01161">
    <property type="entry name" value="PBP"/>
    <property type="match status" value="1"/>
</dbReference>
<dbReference type="SUPFAM" id="SSF49777">
    <property type="entry name" value="PEBP-like"/>
    <property type="match status" value="1"/>
</dbReference>
<protein>
    <recommendedName>
        <fullName>Phosphatidylethanolamine-binding protein homolog R644</fullName>
    </recommendedName>
</protein>
<reference key="1">
    <citation type="journal article" date="2004" name="Science">
        <title>The 1.2-megabase genome sequence of Mimivirus.</title>
        <authorList>
            <person name="Raoult D."/>
            <person name="Audic S."/>
            <person name="Robert C."/>
            <person name="Abergel C."/>
            <person name="Renesto P."/>
            <person name="Ogata H."/>
            <person name="La Scola B."/>
            <person name="Susan M."/>
            <person name="Claverie J.-M."/>
        </authorList>
    </citation>
    <scope>NUCLEOTIDE SEQUENCE [LARGE SCALE GENOMIC DNA]</scope>
    <source>
        <strain>Rowbotham-Bradford</strain>
    </source>
</reference>
<reference key="2">
    <citation type="journal article" date="2006" name="J. Virol.">
        <title>Mimivirus giant particles incorporate a large fraction of anonymous and unique gene products.</title>
        <authorList>
            <person name="Renesto P."/>
            <person name="Abergel C."/>
            <person name="Decloquement P."/>
            <person name="Moinier D."/>
            <person name="Azza S."/>
            <person name="Ogata H."/>
            <person name="Fourquet P."/>
            <person name="Gorvel J.-P."/>
            <person name="Claverie J.-M."/>
            <person name="Raoult D."/>
        </authorList>
    </citation>
    <scope>IDENTIFICATION BY MASS SPECTROMETRY [LARGE SCALE ANALYSIS]</scope>
    <scope>SUBCELLULAR LOCATION</scope>
</reference>